<protein>
    <recommendedName>
        <fullName>Shadow of prion protein</fullName>
        <shortName>Protein shadoo</shortName>
    </recommendedName>
</protein>
<sequence length="147" mass="14591">MNWTAATCWALLLAAAFLCDSCSAKGGRGGARGSARGVRGGARGASRVRVRPAPRYGSSLRVAAAGAAAGAAAGVAAGLATGSGWRRTSGPGELGLEDDENGAMGGNGTDRGVYSYWAWTSGSGSVHSPRICLLLGGTLGALELLRP</sequence>
<keyword id="KW-0034">Amyloid</keyword>
<keyword id="KW-1003">Cell membrane</keyword>
<keyword id="KW-0325">Glycoprotein</keyword>
<keyword id="KW-0336">GPI-anchor</keyword>
<keyword id="KW-0449">Lipoprotein</keyword>
<keyword id="KW-0472">Membrane</keyword>
<keyword id="KW-0640">Prion</keyword>
<keyword id="KW-1185">Reference proteome</keyword>
<keyword id="KW-0732">Signal</keyword>
<name>SPRN_MOUSE</name>
<dbReference type="EMBL" id="AJ621426">
    <property type="protein sequence ID" value="CAF18554.1"/>
    <property type="molecule type" value="mRNA"/>
</dbReference>
<dbReference type="EMBL" id="AK049995">
    <property type="protein sequence ID" value="BAC34022.1"/>
    <property type="molecule type" value="mRNA"/>
</dbReference>
<dbReference type="EMBL" id="BC056484">
    <property type="protein sequence ID" value="AAH56484.1"/>
    <property type="molecule type" value="mRNA"/>
</dbReference>
<dbReference type="EMBL" id="BN000519">
    <property type="protein sequence ID" value="CAG34289.1"/>
    <property type="molecule type" value="Genomic_DNA"/>
</dbReference>
<dbReference type="CCDS" id="CCDS21966.1"/>
<dbReference type="RefSeq" id="NP_898970.1">
    <property type="nucleotide sequence ID" value="NM_183147.2"/>
</dbReference>
<dbReference type="FunCoup" id="Q8BWU1">
    <property type="interactions" value="13"/>
</dbReference>
<dbReference type="STRING" id="10090.ENSMUSP00000053901"/>
<dbReference type="GlyCosmos" id="Q8BWU1">
    <property type="glycosylation" value="1 site, No reported glycans"/>
</dbReference>
<dbReference type="GlyGen" id="Q8BWU1">
    <property type="glycosylation" value="1 site"/>
</dbReference>
<dbReference type="iPTMnet" id="Q8BWU1"/>
<dbReference type="PhosphoSitePlus" id="Q8BWU1"/>
<dbReference type="PaxDb" id="10090-ENSMUSP00000053901"/>
<dbReference type="ProteomicsDB" id="263329"/>
<dbReference type="Antibodypedia" id="55899">
    <property type="antibodies" value="95 antibodies from 16 providers"/>
</dbReference>
<dbReference type="DNASU" id="212518"/>
<dbReference type="Ensembl" id="ENSMUST00000059241.8">
    <property type="protein sequence ID" value="ENSMUSP00000053901.8"/>
    <property type="gene ID" value="ENSMUSG00000045733.8"/>
</dbReference>
<dbReference type="GeneID" id="212518"/>
<dbReference type="KEGG" id="mmu:212518"/>
<dbReference type="UCSC" id="uc009khe.1">
    <property type="organism name" value="mouse"/>
</dbReference>
<dbReference type="AGR" id="MGI:3582583"/>
<dbReference type="CTD" id="503542"/>
<dbReference type="MGI" id="MGI:3582583">
    <property type="gene designation" value="Sprn"/>
</dbReference>
<dbReference type="VEuPathDB" id="HostDB:ENSMUSG00000045733"/>
<dbReference type="eggNOG" id="ENOG502SCEE">
    <property type="taxonomic scope" value="Eukaryota"/>
</dbReference>
<dbReference type="GeneTree" id="ENSGT00730000111694"/>
<dbReference type="HOGENOM" id="CLU_1776846_0_0_1"/>
<dbReference type="InParanoid" id="Q8BWU1"/>
<dbReference type="OMA" id="MNWAPAT"/>
<dbReference type="OrthoDB" id="9809656at2759"/>
<dbReference type="PhylomeDB" id="Q8BWU1"/>
<dbReference type="TreeFam" id="TF330766"/>
<dbReference type="Reactome" id="R-MMU-163125">
    <property type="pathway name" value="Post-translational modification: synthesis of GPI-anchored proteins"/>
</dbReference>
<dbReference type="BioGRID-ORCS" id="212518">
    <property type="hits" value="2 hits in 78 CRISPR screens"/>
</dbReference>
<dbReference type="ChiTaRS" id="Sprn">
    <property type="organism name" value="mouse"/>
</dbReference>
<dbReference type="PRO" id="PR:Q8BWU1"/>
<dbReference type="Proteomes" id="UP000000589">
    <property type="component" value="Chromosome 7"/>
</dbReference>
<dbReference type="RNAct" id="Q8BWU1">
    <property type="molecule type" value="protein"/>
</dbReference>
<dbReference type="Bgee" id="ENSMUSG00000045733">
    <property type="expression patterns" value="Expressed in dentate gyrus of hippocampal formation granule cell and 86 other cell types or tissues"/>
</dbReference>
<dbReference type="ExpressionAtlas" id="Q8BWU1">
    <property type="expression patterns" value="baseline and differential"/>
</dbReference>
<dbReference type="GO" id="GO:0005829">
    <property type="term" value="C:cytosol"/>
    <property type="evidence" value="ECO:0000314"/>
    <property type="project" value="MGI"/>
</dbReference>
<dbReference type="GO" id="GO:0016020">
    <property type="term" value="C:membrane"/>
    <property type="evidence" value="ECO:0000314"/>
    <property type="project" value="MGI"/>
</dbReference>
<dbReference type="GO" id="GO:0005730">
    <property type="term" value="C:nucleolus"/>
    <property type="evidence" value="ECO:0000314"/>
    <property type="project" value="MGI"/>
</dbReference>
<dbReference type="GO" id="GO:0005634">
    <property type="term" value="C:nucleus"/>
    <property type="evidence" value="ECO:0000314"/>
    <property type="project" value="MGI"/>
</dbReference>
<dbReference type="GO" id="GO:0005886">
    <property type="term" value="C:plasma membrane"/>
    <property type="evidence" value="ECO:0000314"/>
    <property type="project" value="MGI"/>
</dbReference>
<dbReference type="GO" id="GO:0098552">
    <property type="term" value="C:side of membrane"/>
    <property type="evidence" value="ECO:0007669"/>
    <property type="project" value="UniProtKB-KW"/>
</dbReference>
<dbReference type="GO" id="GO:0031982">
    <property type="term" value="C:vesicle"/>
    <property type="evidence" value="ECO:0000314"/>
    <property type="project" value="MGI"/>
</dbReference>
<dbReference type="GO" id="GO:0003676">
    <property type="term" value="F:nucleic acid binding"/>
    <property type="evidence" value="ECO:0000314"/>
    <property type="project" value="MGI"/>
</dbReference>
<dbReference type="GO" id="GO:0006606">
    <property type="term" value="P:protein import into nucleus"/>
    <property type="evidence" value="ECO:0000315"/>
    <property type="project" value="MGI"/>
</dbReference>
<dbReference type="InterPro" id="IPR029238">
    <property type="entry name" value="Shadoo"/>
</dbReference>
<dbReference type="PANTHER" id="PTHR28552">
    <property type="entry name" value="SHADOW OF PRION PROTEIN"/>
    <property type="match status" value="1"/>
</dbReference>
<dbReference type="PANTHER" id="PTHR28552:SF1">
    <property type="entry name" value="SHADOW OF PRION PROTEIN"/>
    <property type="match status" value="1"/>
</dbReference>
<dbReference type="Pfam" id="PF14999">
    <property type="entry name" value="Shadoo"/>
    <property type="match status" value="1"/>
</dbReference>
<gene>
    <name type="primary">Sprn</name>
    <name type="synonym">Gm169</name>
</gene>
<organism>
    <name type="scientific">Mus musculus</name>
    <name type="common">Mouse</name>
    <dbReference type="NCBI Taxonomy" id="10090"/>
    <lineage>
        <taxon>Eukaryota</taxon>
        <taxon>Metazoa</taxon>
        <taxon>Chordata</taxon>
        <taxon>Craniata</taxon>
        <taxon>Vertebrata</taxon>
        <taxon>Euteleostomi</taxon>
        <taxon>Mammalia</taxon>
        <taxon>Eutheria</taxon>
        <taxon>Euarchontoglires</taxon>
        <taxon>Glires</taxon>
        <taxon>Rodentia</taxon>
        <taxon>Myomorpha</taxon>
        <taxon>Muroidea</taxon>
        <taxon>Muridae</taxon>
        <taxon>Murinae</taxon>
        <taxon>Mus</taxon>
        <taxon>Mus</taxon>
    </lineage>
</organism>
<proteinExistence type="evidence at protein level"/>
<evidence type="ECO:0000255" key="1"/>
<evidence type="ECO:0000256" key="2">
    <source>
        <dbReference type="SAM" id="MobiDB-lite"/>
    </source>
</evidence>
<evidence type="ECO:0000269" key="3">
    <source>
    </source>
</evidence>
<evidence type="ECO:0000305" key="4"/>
<evidence type="ECO:0000305" key="5">
    <source>
    </source>
</evidence>
<reference key="1">
    <citation type="journal article" date="2003" name="Gene">
        <title>Shadoo, a new protein highly conserved from fish to mammals and with similarity to prion protein.</title>
        <authorList>
            <person name="Premzl M."/>
            <person name="Sangiorgio L."/>
            <person name="Strumbo B."/>
            <person name="Marshall Graves J.A."/>
            <person name="Simonic T."/>
            <person name="Gready J.E."/>
        </authorList>
    </citation>
    <scope>NUCLEOTIDE SEQUENCE [MRNA]</scope>
    <source>
        <strain>ICR</strain>
        <tissue>Brain</tissue>
    </source>
</reference>
<reference key="2">
    <citation type="journal article" date="2005" name="Science">
        <title>The transcriptional landscape of the mammalian genome.</title>
        <authorList>
            <person name="Carninci P."/>
            <person name="Kasukawa T."/>
            <person name="Katayama S."/>
            <person name="Gough J."/>
            <person name="Frith M.C."/>
            <person name="Maeda N."/>
            <person name="Oyama R."/>
            <person name="Ravasi T."/>
            <person name="Lenhard B."/>
            <person name="Wells C."/>
            <person name="Kodzius R."/>
            <person name="Shimokawa K."/>
            <person name="Bajic V.B."/>
            <person name="Brenner S.E."/>
            <person name="Batalov S."/>
            <person name="Forrest A.R."/>
            <person name="Zavolan M."/>
            <person name="Davis M.J."/>
            <person name="Wilming L.G."/>
            <person name="Aidinis V."/>
            <person name="Allen J.E."/>
            <person name="Ambesi-Impiombato A."/>
            <person name="Apweiler R."/>
            <person name="Aturaliya R.N."/>
            <person name="Bailey T.L."/>
            <person name="Bansal M."/>
            <person name="Baxter L."/>
            <person name="Beisel K.W."/>
            <person name="Bersano T."/>
            <person name="Bono H."/>
            <person name="Chalk A.M."/>
            <person name="Chiu K.P."/>
            <person name="Choudhary V."/>
            <person name="Christoffels A."/>
            <person name="Clutterbuck D.R."/>
            <person name="Crowe M.L."/>
            <person name="Dalla E."/>
            <person name="Dalrymple B.P."/>
            <person name="de Bono B."/>
            <person name="Della Gatta G."/>
            <person name="di Bernardo D."/>
            <person name="Down T."/>
            <person name="Engstrom P."/>
            <person name="Fagiolini M."/>
            <person name="Faulkner G."/>
            <person name="Fletcher C.F."/>
            <person name="Fukushima T."/>
            <person name="Furuno M."/>
            <person name="Futaki S."/>
            <person name="Gariboldi M."/>
            <person name="Georgii-Hemming P."/>
            <person name="Gingeras T.R."/>
            <person name="Gojobori T."/>
            <person name="Green R.E."/>
            <person name="Gustincich S."/>
            <person name="Harbers M."/>
            <person name="Hayashi Y."/>
            <person name="Hensch T.K."/>
            <person name="Hirokawa N."/>
            <person name="Hill D."/>
            <person name="Huminiecki L."/>
            <person name="Iacono M."/>
            <person name="Ikeo K."/>
            <person name="Iwama A."/>
            <person name="Ishikawa T."/>
            <person name="Jakt M."/>
            <person name="Kanapin A."/>
            <person name="Katoh M."/>
            <person name="Kawasawa Y."/>
            <person name="Kelso J."/>
            <person name="Kitamura H."/>
            <person name="Kitano H."/>
            <person name="Kollias G."/>
            <person name="Krishnan S.P."/>
            <person name="Kruger A."/>
            <person name="Kummerfeld S.K."/>
            <person name="Kurochkin I.V."/>
            <person name="Lareau L.F."/>
            <person name="Lazarevic D."/>
            <person name="Lipovich L."/>
            <person name="Liu J."/>
            <person name="Liuni S."/>
            <person name="McWilliam S."/>
            <person name="Madan Babu M."/>
            <person name="Madera M."/>
            <person name="Marchionni L."/>
            <person name="Matsuda H."/>
            <person name="Matsuzawa S."/>
            <person name="Miki H."/>
            <person name="Mignone F."/>
            <person name="Miyake S."/>
            <person name="Morris K."/>
            <person name="Mottagui-Tabar S."/>
            <person name="Mulder N."/>
            <person name="Nakano N."/>
            <person name="Nakauchi H."/>
            <person name="Ng P."/>
            <person name="Nilsson R."/>
            <person name="Nishiguchi S."/>
            <person name="Nishikawa S."/>
            <person name="Nori F."/>
            <person name="Ohara O."/>
            <person name="Okazaki Y."/>
            <person name="Orlando V."/>
            <person name="Pang K.C."/>
            <person name="Pavan W.J."/>
            <person name="Pavesi G."/>
            <person name="Pesole G."/>
            <person name="Petrovsky N."/>
            <person name="Piazza S."/>
            <person name="Reed J."/>
            <person name="Reid J.F."/>
            <person name="Ring B.Z."/>
            <person name="Ringwald M."/>
            <person name="Rost B."/>
            <person name="Ruan Y."/>
            <person name="Salzberg S.L."/>
            <person name="Sandelin A."/>
            <person name="Schneider C."/>
            <person name="Schoenbach C."/>
            <person name="Sekiguchi K."/>
            <person name="Semple C.A."/>
            <person name="Seno S."/>
            <person name="Sessa L."/>
            <person name="Sheng Y."/>
            <person name="Shibata Y."/>
            <person name="Shimada H."/>
            <person name="Shimada K."/>
            <person name="Silva D."/>
            <person name="Sinclair B."/>
            <person name="Sperling S."/>
            <person name="Stupka E."/>
            <person name="Sugiura K."/>
            <person name="Sultana R."/>
            <person name="Takenaka Y."/>
            <person name="Taki K."/>
            <person name="Tammoja K."/>
            <person name="Tan S.L."/>
            <person name="Tang S."/>
            <person name="Taylor M.S."/>
            <person name="Tegner J."/>
            <person name="Teichmann S.A."/>
            <person name="Ueda H.R."/>
            <person name="van Nimwegen E."/>
            <person name="Verardo R."/>
            <person name="Wei C.L."/>
            <person name="Yagi K."/>
            <person name="Yamanishi H."/>
            <person name="Zabarovsky E."/>
            <person name="Zhu S."/>
            <person name="Zimmer A."/>
            <person name="Hide W."/>
            <person name="Bult C."/>
            <person name="Grimmond S.M."/>
            <person name="Teasdale R.D."/>
            <person name="Liu E.T."/>
            <person name="Brusic V."/>
            <person name="Quackenbush J."/>
            <person name="Wahlestedt C."/>
            <person name="Mattick J.S."/>
            <person name="Hume D.A."/>
            <person name="Kai C."/>
            <person name="Sasaki D."/>
            <person name="Tomaru Y."/>
            <person name="Fukuda S."/>
            <person name="Kanamori-Katayama M."/>
            <person name="Suzuki M."/>
            <person name="Aoki J."/>
            <person name="Arakawa T."/>
            <person name="Iida J."/>
            <person name="Imamura K."/>
            <person name="Itoh M."/>
            <person name="Kato T."/>
            <person name="Kawaji H."/>
            <person name="Kawagashira N."/>
            <person name="Kawashima T."/>
            <person name="Kojima M."/>
            <person name="Kondo S."/>
            <person name="Konno H."/>
            <person name="Nakano K."/>
            <person name="Ninomiya N."/>
            <person name="Nishio T."/>
            <person name="Okada M."/>
            <person name="Plessy C."/>
            <person name="Shibata K."/>
            <person name="Shiraki T."/>
            <person name="Suzuki S."/>
            <person name="Tagami M."/>
            <person name="Waki K."/>
            <person name="Watahiki A."/>
            <person name="Okamura-Oho Y."/>
            <person name="Suzuki H."/>
            <person name="Kawai J."/>
            <person name="Hayashizaki Y."/>
        </authorList>
    </citation>
    <scope>NUCLEOTIDE SEQUENCE [LARGE SCALE MRNA]</scope>
    <source>
        <strain>C57BL/6J</strain>
        <tissue>Hippocampus</tissue>
    </source>
</reference>
<reference key="3">
    <citation type="journal article" date="2004" name="Genome Res.">
        <title>The status, quality, and expansion of the NIH full-length cDNA project: the Mammalian Gene Collection (MGC).</title>
        <authorList>
            <consortium name="The MGC Project Team"/>
        </authorList>
    </citation>
    <scope>NUCLEOTIDE SEQUENCE [LARGE SCALE MRNA]</scope>
    <source>
        <strain>C57BL/6J</strain>
        <tissue>Brain</tissue>
    </source>
</reference>
<reference key="4">
    <citation type="journal article" date="2007" name="BMC Genomics">
        <title>Comparative genomic analysis of prion genes.</title>
        <authorList>
            <person name="Premzl M."/>
            <person name="Gamulin V."/>
        </authorList>
    </citation>
    <scope>IDENTIFICATION</scope>
</reference>
<reference key="5">
    <citation type="journal article" date="2007" name="EMBO J.">
        <title>The CNS glycoprotein Shadoo has PrP(C)-like protective properties and displays reduced levels in prion infections.</title>
        <authorList>
            <person name="Watts J.C."/>
            <person name="Drisaldi B."/>
            <person name="Ng V."/>
            <person name="Yang J."/>
            <person name="Strome B."/>
            <person name="Horne P."/>
            <person name="Sy M.-S."/>
            <person name="Yoong L."/>
            <person name="Young R."/>
            <person name="Mastrangelo P."/>
            <person name="Bergeron C."/>
            <person name="Fraser P.E."/>
            <person name="Carlson G.A."/>
            <person name="Mount H.T.J."/>
            <person name="Schmitt-Ulms G."/>
            <person name="Westaway D."/>
        </authorList>
    </citation>
    <scope>FUNCTION</scope>
    <scope>SUBCELLULAR LOCATION</scope>
    <scope>TISSUE SPECIFICITY</scope>
    <scope>DEVELOPMENTAL STAGE</scope>
    <scope>INDUCTION</scope>
    <scope>GLYCOSYLATION</scope>
    <scope>GPI-ANCHOR</scope>
</reference>
<feature type="signal peptide" evidence="1">
    <location>
        <begin position="1"/>
        <end position="24"/>
    </location>
</feature>
<feature type="chain" id="PRO_0000320167" description="Shadow of prion protein">
    <location>
        <begin position="25"/>
        <end position="122"/>
    </location>
</feature>
<feature type="propeptide" id="PRO_0000320168" description="Removed in mature form" evidence="1">
    <location>
        <begin position="123"/>
        <end position="147"/>
    </location>
</feature>
<feature type="region of interest" description="Disordered" evidence="2">
    <location>
        <begin position="26"/>
        <end position="45"/>
    </location>
</feature>
<feature type="compositionally biased region" description="Gly residues" evidence="2">
    <location>
        <begin position="26"/>
        <end position="43"/>
    </location>
</feature>
<feature type="lipid moiety-binding region" description="GPI-anchor amidated glycine" evidence="1">
    <location>
        <position position="122"/>
    </location>
</feature>
<feature type="glycosylation site" description="N-linked (GlcNAc...) asparagine" evidence="5">
    <location>
        <position position="107"/>
    </location>
</feature>
<comment type="function">
    <text evidence="3">Prion-like protein that has PrP(C)-like neuroprotective activity. May act as a modulator for the biological actions of normal and abnormal PrP.</text>
</comment>
<comment type="subcellular location">
    <subcellularLocation>
        <location evidence="3">Cell membrane</location>
        <topology evidence="3">Lipid-anchor</topology>
        <topology evidence="3">GPI-anchor</topology>
    </subcellularLocation>
</comment>
<comment type="tissue specificity">
    <text evidence="3">Mainly expressed in brain (at protein level). In brain, it is highly expressed in the hippocampus and cerebellum and is also expressed at lower level in other areas of the brain including the cerebral cortex, the thalamus and the medulla. In hippocampus and cerebellum it is highly expressed in the cell bodies of pyramidal cells and Purkinje cells, respectively.</text>
</comment>
<comment type="developmental stage">
    <text evidence="3">Appears at embryonic day 16 and persists in early postnatal life and in the brains of adults (at protein level).</text>
</comment>
<comment type="induction">
    <text evidence="3">Strongly down-regulated in prion-infected brains (at protein level).</text>
</comment>
<comment type="PTM">
    <text evidence="3">N-glycosylated.</text>
</comment>
<comment type="miscellaneous">
    <text>This protein is a candidate for 'Pi' factor, a PrP(C)-like protein able to compensate for the absence of PrPC in mice lacking Prnp.</text>
</comment>
<comment type="similarity">
    <text evidence="4">Belongs to the SPRN family.</text>
</comment>
<accession>Q8BWU1</accession>